<reference key="1">
    <citation type="journal article" date="1998" name="Nature">
        <title>Deciphering the biology of Mycobacterium tuberculosis from the complete genome sequence.</title>
        <authorList>
            <person name="Cole S.T."/>
            <person name="Brosch R."/>
            <person name="Parkhill J."/>
            <person name="Garnier T."/>
            <person name="Churcher C.M."/>
            <person name="Harris D.E."/>
            <person name="Gordon S.V."/>
            <person name="Eiglmeier K."/>
            <person name="Gas S."/>
            <person name="Barry C.E. III"/>
            <person name="Tekaia F."/>
            <person name="Badcock K."/>
            <person name="Basham D."/>
            <person name="Brown D."/>
            <person name="Chillingworth T."/>
            <person name="Connor R."/>
            <person name="Davies R.M."/>
            <person name="Devlin K."/>
            <person name="Feltwell T."/>
            <person name="Gentles S."/>
            <person name="Hamlin N."/>
            <person name="Holroyd S."/>
            <person name="Hornsby T."/>
            <person name="Jagels K."/>
            <person name="Krogh A."/>
            <person name="McLean J."/>
            <person name="Moule S."/>
            <person name="Murphy L.D."/>
            <person name="Oliver S."/>
            <person name="Osborne J."/>
            <person name="Quail M.A."/>
            <person name="Rajandream M.A."/>
            <person name="Rogers J."/>
            <person name="Rutter S."/>
            <person name="Seeger K."/>
            <person name="Skelton S."/>
            <person name="Squares S."/>
            <person name="Squares R."/>
            <person name="Sulston J.E."/>
            <person name="Taylor K."/>
            <person name="Whitehead S."/>
            <person name="Barrell B.G."/>
        </authorList>
    </citation>
    <scope>NUCLEOTIDE SEQUENCE [LARGE SCALE GENOMIC DNA]</scope>
    <source>
        <strain>ATCC 25618 / H37Rv</strain>
    </source>
</reference>
<reference key="2">
    <citation type="journal article" date="2011" name="Mol. Cell. Proteomics">
        <title>Proteogenomic analysis of Mycobacterium tuberculosis by high resolution mass spectrometry.</title>
        <authorList>
            <person name="Kelkar D.S."/>
            <person name="Kumar D."/>
            <person name="Kumar P."/>
            <person name="Balakrishnan L."/>
            <person name="Muthusamy B."/>
            <person name="Yadav A.K."/>
            <person name="Shrivastava P."/>
            <person name="Marimuthu A."/>
            <person name="Anand S."/>
            <person name="Sundaram H."/>
            <person name="Kingsbury R."/>
            <person name="Harsha H.C."/>
            <person name="Nair B."/>
            <person name="Prasad T.S."/>
            <person name="Chauhan D.S."/>
            <person name="Katoch K."/>
            <person name="Katoch V.M."/>
            <person name="Kumar P."/>
            <person name="Chaerkady R."/>
            <person name="Ramachandran S."/>
            <person name="Dash D."/>
            <person name="Pandey A."/>
        </authorList>
    </citation>
    <scope>IDENTIFICATION BY MASS SPECTROMETRY [LARGE SCALE ANALYSIS]</scope>
    <source>
        <strain>ATCC 25618 / H37Rv</strain>
    </source>
</reference>
<gene>
    <name type="ordered locus">Rv1424c</name>
    <name type="ORF">MTCY21B4.42c</name>
    <name type="ORF">MTCY493.30</name>
</gene>
<organism>
    <name type="scientific">Mycobacterium tuberculosis (strain ATCC 25618 / H37Rv)</name>
    <dbReference type="NCBI Taxonomy" id="83332"/>
    <lineage>
        <taxon>Bacteria</taxon>
        <taxon>Bacillati</taxon>
        <taxon>Actinomycetota</taxon>
        <taxon>Actinomycetes</taxon>
        <taxon>Mycobacteriales</taxon>
        <taxon>Mycobacteriaceae</taxon>
        <taxon>Mycobacterium</taxon>
        <taxon>Mycobacterium tuberculosis complex</taxon>
    </lineage>
</organism>
<protein>
    <recommendedName>
        <fullName>Uncharacterized protein Rv1424c</fullName>
    </recommendedName>
</protein>
<feature type="chain" id="PRO_0000103847" description="Uncharacterized protein Rv1424c">
    <location>
        <begin position="1"/>
        <end position="253"/>
    </location>
</feature>
<dbReference type="EMBL" id="AL123456">
    <property type="protein sequence ID" value="CCP44183.1"/>
    <property type="molecule type" value="Genomic_DNA"/>
</dbReference>
<dbReference type="PIR" id="C70914">
    <property type="entry name" value="C70914"/>
</dbReference>
<dbReference type="RefSeq" id="NP_215940.1">
    <property type="nucleotide sequence ID" value="NC_000962.3"/>
</dbReference>
<dbReference type="RefSeq" id="WP_003407359.1">
    <property type="nucleotide sequence ID" value="NZ_NVQJ01000038.1"/>
</dbReference>
<dbReference type="SMR" id="P9WLX7"/>
<dbReference type="PaxDb" id="83332-Rv1424c"/>
<dbReference type="DNASU" id="886685"/>
<dbReference type="GeneID" id="886685"/>
<dbReference type="KEGG" id="mtu:Rv1424c"/>
<dbReference type="KEGG" id="mtv:RVBD_1424c"/>
<dbReference type="TubercuList" id="Rv1424c"/>
<dbReference type="InParanoid" id="P9WLX7"/>
<dbReference type="Proteomes" id="UP000001584">
    <property type="component" value="Chromosome"/>
</dbReference>
<dbReference type="GO" id="GO:0009274">
    <property type="term" value="C:peptidoglycan-based cell wall"/>
    <property type="evidence" value="ECO:0007005"/>
    <property type="project" value="MTBBASE"/>
</dbReference>
<dbReference type="GO" id="GO:0005886">
    <property type="term" value="C:plasma membrane"/>
    <property type="evidence" value="ECO:0007005"/>
    <property type="project" value="MTBBASE"/>
</dbReference>
<keyword id="KW-1185">Reference proteome</keyword>
<sequence length="253" mass="27427">MTVVPGAPSRPASAVSRPSYRQCVQASAQTSARRYSFPSYRRPPAEKLVFPVLLGILTLLLSACQTASASGYNEPRGYDRATLKLVFSMDLGMCLNRFTYDSKLAPSRPQVVACDSREARIRNDGFHANAPSCMRIDYELITQNHRAYYCLKYLVRVGYCYPAVTTPGKPPSVLLYAPSACDESLPSPRVATALVPGTRSANREFSRFVVTEIKSLGAGGRCDSASVSLQPPEEIEGPAIPPASSQLVCVAPK</sequence>
<accession>P9WLX7</accession>
<accession>L0T9K9</accession>
<accession>O08160</accession>
<accession>P64851</accession>
<accession>P71693</accession>
<name>Y1424_MYCTU</name>
<proteinExistence type="evidence at protein level"/>